<gene>
    <name evidence="1" type="primary">murG</name>
    <name type="ordered locus">Tmel_0891</name>
</gene>
<feature type="chain" id="PRO_1000057258" description="UDP-N-acetylglucosamine--N-acetylmuramyl-(pentapeptide) pyrophosphoryl-undecaprenol N-acetylglucosamine transferase">
    <location>
        <begin position="1"/>
        <end position="334"/>
    </location>
</feature>
<feature type="binding site" evidence="1">
    <location>
        <begin position="11"/>
        <end position="13"/>
    </location>
    <ligand>
        <name>UDP-N-acetyl-alpha-D-glucosamine</name>
        <dbReference type="ChEBI" id="CHEBI:57705"/>
    </ligand>
</feature>
<feature type="binding site" evidence="1">
    <location>
        <position position="125"/>
    </location>
    <ligand>
        <name>UDP-N-acetyl-alpha-D-glucosamine</name>
        <dbReference type="ChEBI" id="CHEBI:57705"/>
    </ligand>
</feature>
<feature type="binding site" evidence="1">
    <location>
        <position position="185"/>
    </location>
    <ligand>
        <name>UDP-N-acetyl-alpha-D-glucosamine</name>
        <dbReference type="ChEBI" id="CHEBI:57705"/>
    </ligand>
</feature>
<feature type="binding site" evidence="1">
    <location>
        <position position="229"/>
    </location>
    <ligand>
        <name>UDP-N-acetyl-alpha-D-glucosamine</name>
        <dbReference type="ChEBI" id="CHEBI:57705"/>
    </ligand>
</feature>
<feature type="binding site" evidence="1">
    <location>
        <position position="274"/>
    </location>
    <ligand>
        <name>UDP-N-acetyl-alpha-D-glucosamine</name>
        <dbReference type="ChEBI" id="CHEBI:57705"/>
    </ligand>
</feature>
<sequence>MIKIAVAGGVTGGHLYPALATLNELQKITPIDVLYFTVKGKLEEKVLKDYNFKTVSLDVKGLIRPLYSFGNIKRILKILNAKNIVKKALKDFKPDIAFVTGGYVSYPVGVTAKQLGFLLYIHEQNVIPGLTNLKLSKIADKVFVSFESSKKYFEREVFVSGNPIFIHQKKLLNFDKKTVLIIGGSGGSEFLNELACKLAKKMKDLQFILSTGGKNIKCLEENLRAIDYIENMADYYQSVNCAITRGGATTVSELLYFQVPSIVIPWEGATESHQIENAKEIEKGNLGFVVREKDLDLNNLIDKIKILSSRERKIIKKENPATIIAKEIAKEVLK</sequence>
<name>MURG_THEM4</name>
<accession>A6LLF1</accession>
<organism>
    <name type="scientific">Thermosipho melanesiensis (strain DSM 12029 / CIP 104789 / BI429)</name>
    <dbReference type="NCBI Taxonomy" id="391009"/>
    <lineage>
        <taxon>Bacteria</taxon>
        <taxon>Thermotogati</taxon>
        <taxon>Thermotogota</taxon>
        <taxon>Thermotogae</taxon>
        <taxon>Thermotogales</taxon>
        <taxon>Fervidobacteriaceae</taxon>
        <taxon>Thermosipho</taxon>
    </lineage>
</organism>
<proteinExistence type="inferred from homology"/>
<keyword id="KW-0131">Cell cycle</keyword>
<keyword id="KW-0132">Cell division</keyword>
<keyword id="KW-0997">Cell inner membrane</keyword>
<keyword id="KW-1003">Cell membrane</keyword>
<keyword id="KW-0133">Cell shape</keyword>
<keyword id="KW-0961">Cell wall biogenesis/degradation</keyword>
<keyword id="KW-0328">Glycosyltransferase</keyword>
<keyword id="KW-0472">Membrane</keyword>
<keyword id="KW-0573">Peptidoglycan synthesis</keyword>
<keyword id="KW-0808">Transferase</keyword>
<dbReference type="EC" id="2.4.1.227" evidence="1"/>
<dbReference type="EMBL" id="CP000716">
    <property type="protein sequence ID" value="ABR30752.1"/>
    <property type="molecule type" value="Genomic_DNA"/>
</dbReference>
<dbReference type="RefSeq" id="WP_012057113.1">
    <property type="nucleotide sequence ID" value="NC_009616.1"/>
</dbReference>
<dbReference type="SMR" id="A6LLF1"/>
<dbReference type="STRING" id="391009.Tmel_0891"/>
<dbReference type="CAZy" id="GT28">
    <property type="family name" value="Glycosyltransferase Family 28"/>
</dbReference>
<dbReference type="KEGG" id="tme:Tmel_0891"/>
<dbReference type="eggNOG" id="COG0707">
    <property type="taxonomic scope" value="Bacteria"/>
</dbReference>
<dbReference type="HOGENOM" id="CLU_037404_2_1_0"/>
<dbReference type="OrthoDB" id="9808936at2"/>
<dbReference type="UniPathway" id="UPA00219"/>
<dbReference type="Proteomes" id="UP000001110">
    <property type="component" value="Chromosome"/>
</dbReference>
<dbReference type="GO" id="GO:0005886">
    <property type="term" value="C:plasma membrane"/>
    <property type="evidence" value="ECO:0007669"/>
    <property type="project" value="UniProtKB-SubCell"/>
</dbReference>
<dbReference type="GO" id="GO:0051991">
    <property type="term" value="F:UDP-N-acetyl-D-glucosamine:N-acetylmuramoyl-L-alanyl-D-glutamyl-meso-2,6-diaminopimelyl-D-alanyl-D-alanine-diphosphoundecaprenol 4-beta-N-acetylglucosaminlytransferase activity"/>
    <property type="evidence" value="ECO:0007669"/>
    <property type="project" value="RHEA"/>
</dbReference>
<dbReference type="GO" id="GO:0050511">
    <property type="term" value="F:undecaprenyldiphospho-muramoylpentapeptide beta-N-acetylglucosaminyltransferase activity"/>
    <property type="evidence" value="ECO:0007669"/>
    <property type="project" value="UniProtKB-UniRule"/>
</dbReference>
<dbReference type="GO" id="GO:0005975">
    <property type="term" value="P:carbohydrate metabolic process"/>
    <property type="evidence" value="ECO:0007669"/>
    <property type="project" value="InterPro"/>
</dbReference>
<dbReference type="GO" id="GO:0051301">
    <property type="term" value="P:cell division"/>
    <property type="evidence" value="ECO:0007669"/>
    <property type="project" value="UniProtKB-KW"/>
</dbReference>
<dbReference type="GO" id="GO:0071555">
    <property type="term" value="P:cell wall organization"/>
    <property type="evidence" value="ECO:0007669"/>
    <property type="project" value="UniProtKB-KW"/>
</dbReference>
<dbReference type="GO" id="GO:0030259">
    <property type="term" value="P:lipid glycosylation"/>
    <property type="evidence" value="ECO:0007669"/>
    <property type="project" value="UniProtKB-UniRule"/>
</dbReference>
<dbReference type="GO" id="GO:0009252">
    <property type="term" value="P:peptidoglycan biosynthetic process"/>
    <property type="evidence" value="ECO:0007669"/>
    <property type="project" value="UniProtKB-UniRule"/>
</dbReference>
<dbReference type="GO" id="GO:0008360">
    <property type="term" value="P:regulation of cell shape"/>
    <property type="evidence" value="ECO:0007669"/>
    <property type="project" value="UniProtKB-KW"/>
</dbReference>
<dbReference type="CDD" id="cd03785">
    <property type="entry name" value="GT28_MurG"/>
    <property type="match status" value="1"/>
</dbReference>
<dbReference type="Gene3D" id="3.40.50.2000">
    <property type="entry name" value="Glycogen Phosphorylase B"/>
    <property type="match status" value="2"/>
</dbReference>
<dbReference type="HAMAP" id="MF_00033">
    <property type="entry name" value="MurG"/>
    <property type="match status" value="1"/>
</dbReference>
<dbReference type="InterPro" id="IPR006009">
    <property type="entry name" value="GlcNAc_MurG"/>
</dbReference>
<dbReference type="InterPro" id="IPR007235">
    <property type="entry name" value="Glyco_trans_28_C"/>
</dbReference>
<dbReference type="InterPro" id="IPR004276">
    <property type="entry name" value="GlycoTrans_28_N"/>
</dbReference>
<dbReference type="PANTHER" id="PTHR21015:SF22">
    <property type="entry name" value="GLYCOSYLTRANSFERASE"/>
    <property type="match status" value="1"/>
</dbReference>
<dbReference type="PANTHER" id="PTHR21015">
    <property type="entry name" value="UDP-N-ACETYLGLUCOSAMINE--N-ACETYLMURAMYL-(PENTAPEPTIDE) PYROPHOSPHORYL-UNDECAPRENOL N-ACETYLGLUCOSAMINE TRANSFERASE 1"/>
    <property type="match status" value="1"/>
</dbReference>
<dbReference type="Pfam" id="PF04101">
    <property type="entry name" value="Glyco_tran_28_C"/>
    <property type="match status" value="1"/>
</dbReference>
<dbReference type="Pfam" id="PF03033">
    <property type="entry name" value="Glyco_transf_28"/>
    <property type="match status" value="1"/>
</dbReference>
<dbReference type="SUPFAM" id="SSF53756">
    <property type="entry name" value="UDP-Glycosyltransferase/glycogen phosphorylase"/>
    <property type="match status" value="1"/>
</dbReference>
<reference key="1">
    <citation type="submission" date="2007-05" db="EMBL/GenBank/DDBJ databases">
        <title>Complete sequence of Thermosipho melanesiensis BI429.</title>
        <authorList>
            <consortium name="US DOE Joint Genome Institute"/>
            <person name="Copeland A."/>
            <person name="Lucas S."/>
            <person name="Lapidus A."/>
            <person name="Barry K."/>
            <person name="Glavina del Rio T."/>
            <person name="Dalin E."/>
            <person name="Tice H."/>
            <person name="Pitluck S."/>
            <person name="Chertkov O."/>
            <person name="Brettin T."/>
            <person name="Bruce D."/>
            <person name="Detter J.C."/>
            <person name="Han C."/>
            <person name="Schmutz J."/>
            <person name="Larimer F."/>
            <person name="Land M."/>
            <person name="Hauser L."/>
            <person name="Kyrpides N."/>
            <person name="Mikhailova N."/>
            <person name="Nelson K."/>
            <person name="Gogarten J.P."/>
            <person name="Noll K."/>
            <person name="Richardson P."/>
        </authorList>
    </citation>
    <scope>NUCLEOTIDE SEQUENCE [LARGE SCALE GENOMIC DNA]</scope>
    <source>
        <strain>DSM 12029 / CIP 104789 / BI429</strain>
    </source>
</reference>
<protein>
    <recommendedName>
        <fullName evidence="1">UDP-N-acetylglucosamine--N-acetylmuramyl-(pentapeptide) pyrophosphoryl-undecaprenol N-acetylglucosamine transferase</fullName>
        <ecNumber evidence="1">2.4.1.227</ecNumber>
    </recommendedName>
    <alternativeName>
        <fullName evidence="1">Undecaprenyl-PP-MurNAc-pentapeptide-UDPGlcNAc GlcNAc transferase</fullName>
    </alternativeName>
</protein>
<comment type="function">
    <text evidence="1">Cell wall formation. Catalyzes the transfer of a GlcNAc subunit on undecaprenyl-pyrophosphoryl-MurNAc-pentapeptide (lipid intermediate I) to form undecaprenyl-pyrophosphoryl-MurNAc-(pentapeptide)GlcNAc (lipid intermediate II).</text>
</comment>
<comment type="catalytic activity">
    <reaction evidence="1">
        <text>di-trans,octa-cis-undecaprenyl diphospho-N-acetyl-alpha-D-muramoyl-L-alanyl-D-glutamyl-meso-2,6-diaminopimeloyl-D-alanyl-D-alanine + UDP-N-acetyl-alpha-D-glucosamine = di-trans,octa-cis-undecaprenyl diphospho-[N-acetyl-alpha-D-glucosaminyl-(1-&gt;4)]-N-acetyl-alpha-D-muramoyl-L-alanyl-D-glutamyl-meso-2,6-diaminopimeloyl-D-alanyl-D-alanine + UDP + H(+)</text>
        <dbReference type="Rhea" id="RHEA:31227"/>
        <dbReference type="ChEBI" id="CHEBI:15378"/>
        <dbReference type="ChEBI" id="CHEBI:57705"/>
        <dbReference type="ChEBI" id="CHEBI:58223"/>
        <dbReference type="ChEBI" id="CHEBI:61387"/>
        <dbReference type="ChEBI" id="CHEBI:61388"/>
        <dbReference type="EC" id="2.4.1.227"/>
    </reaction>
</comment>
<comment type="pathway">
    <text evidence="1">Cell wall biogenesis; peptidoglycan biosynthesis.</text>
</comment>
<comment type="subcellular location">
    <subcellularLocation>
        <location evidence="1">Cell inner membrane</location>
        <topology evidence="1">Peripheral membrane protein</topology>
        <orientation evidence="1">Cytoplasmic side</orientation>
    </subcellularLocation>
</comment>
<comment type="similarity">
    <text evidence="1">Belongs to the glycosyltransferase 28 family. MurG subfamily.</text>
</comment>
<evidence type="ECO:0000255" key="1">
    <source>
        <dbReference type="HAMAP-Rule" id="MF_00033"/>
    </source>
</evidence>